<reference key="1">
    <citation type="journal article" date="2006" name="PLoS Biol.">
        <title>Metabolic complementarity and genomics of the dual bacterial symbiosis of sharpshooters.</title>
        <authorList>
            <person name="Wu D."/>
            <person name="Daugherty S.C."/>
            <person name="Van Aken S.E."/>
            <person name="Pai G.H."/>
            <person name="Watkins K.L."/>
            <person name="Khouri H."/>
            <person name="Tallon L.J."/>
            <person name="Zaborsky J.M."/>
            <person name="Dunbar H.E."/>
            <person name="Tran P.L."/>
            <person name="Moran N.A."/>
            <person name="Eisen J.A."/>
        </authorList>
    </citation>
    <scope>NUCLEOTIDE SEQUENCE [LARGE SCALE GENOMIC DNA]</scope>
</reference>
<protein>
    <recommendedName>
        <fullName evidence="1">Pyridoxine/pyridoxamine 5'-phosphate oxidase</fullName>
        <ecNumber evidence="1">1.4.3.5</ecNumber>
    </recommendedName>
    <alternativeName>
        <fullName evidence="1">PNP/PMP oxidase</fullName>
        <shortName evidence="1">PNPOx</shortName>
    </alternativeName>
    <alternativeName>
        <fullName evidence="1">Pyridoxal 5'-phosphate synthase</fullName>
    </alternativeName>
</protein>
<proteinExistence type="inferred from homology"/>
<name>PDXH_BAUCH</name>
<keyword id="KW-0285">Flavoprotein</keyword>
<keyword id="KW-0288">FMN</keyword>
<keyword id="KW-0560">Oxidoreductase</keyword>
<keyword id="KW-0664">Pyridoxine biosynthesis</keyword>
<keyword id="KW-1185">Reference proteome</keyword>
<gene>
    <name evidence="1" type="primary">pdxH</name>
    <name type="ordered locus">BCI_0082</name>
</gene>
<comment type="function">
    <text evidence="1">Catalyzes the oxidation of either pyridoxine 5'-phosphate (PNP) or pyridoxamine 5'-phosphate (PMP) into pyridoxal 5'-phosphate (PLP).</text>
</comment>
<comment type="catalytic activity">
    <reaction evidence="1">
        <text>pyridoxamine 5'-phosphate + O2 + H2O = pyridoxal 5'-phosphate + H2O2 + NH4(+)</text>
        <dbReference type="Rhea" id="RHEA:15817"/>
        <dbReference type="ChEBI" id="CHEBI:15377"/>
        <dbReference type="ChEBI" id="CHEBI:15379"/>
        <dbReference type="ChEBI" id="CHEBI:16240"/>
        <dbReference type="ChEBI" id="CHEBI:28938"/>
        <dbReference type="ChEBI" id="CHEBI:58451"/>
        <dbReference type="ChEBI" id="CHEBI:597326"/>
        <dbReference type="EC" id="1.4.3.5"/>
    </reaction>
</comment>
<comment type="catalytic activity">
    <reaction evidence="1">
        <text>pyridoxine 5'-phosphate + O2 = pyridoxal 5'-phosphate + H2O2</text>
        <dbReference type="Rhea" id="RHEA:15149"/>
        <dbReference type="ChEBI" id="CHEBI:15379"/>
        <dbReference type="ChEBI" id="CHEBI:16240"/>
        <dbReference type="ChEBI" id="CHEBI:58589"/>
        <dbReference type="ChEBI" id="CHEBI:597326"/>
        <dbReference type="EC" id="1.4.3.5"/>
    </reaction>
</comment>
<comment type="cofactor">
    <cofactor evidence="1">
        <name>FMN</name>
        <dbReference type="ChEBI" id="CHEBI:58210"/>
    </cofactor>
    <text evidence="1">Binds 1 FMN per subunit.</text>
</comment>
<comment type="pathway">
    <text evidence="1">Cofactor metabolism; pyridoxal 5'-phosphate salvage; pyridoxal 5'-phosphate from pyridoxamine 5'-phosphate: step 1/1.</text>
</comment>
<comment type="pathway">
    <text evidence="1">Cofactor metabolism; pyridoxal 5'-phosphate salvage; pyridoxal 5'-phosphate from pyridoxine 5'-phosphate: step 1/1.</text>
</comment>
<comment type="subunit">
    <text evidence="1">Homodimer.</text>
</comment>
<comment type="similarity">
    <text evidence="1">Belongs to the pyridoxamine 5'-phosphate oxidase family.</text>
</comment>
<sequence>MNKQSINIAQIRREYTHKRLRRADLTLEPMELFERWFRQASTAQLLDLTVVSVATVDQTGQPYQRLVLLKHFDAKGMVFYTNLGSRKAQHLAHNARISLHFPWHALERQVMVLGTAKQLALKEVMHYFSSRPRNSQISAWASSQSSLIDTRDTLVSTFLKFNNYFHQGKVPLPSFWGGYRVHIDSMEFWQGGAYRLHDRFIYQRIASGWRIDRLAP</sequence>
<accession>Q1LU04</accession>
<feature type="chain" id="PRO_0000255853" description="Pyridoxine/pyridoxamine 5'-phosphate oxidase">
    <location>
        <begin position="1"/>
        <end position="216"/>
    </location>
</feature>
<feature type="binding site" evidence="1">
    <location>
        <begin position="12"/>
        <end position="15"/>
    </location>
    <ligand>
        <name>substrate</name>
    </ligand>
</feature>
<feature type="binding site" evidence="1">
    <location>
        <begin position="65"/>
        <end position="70"/>
    </location>
    <ligand>
        <name>FMN</name>
        <dbReference type="ChEBI" id="CHEBI:58210"/>
    </ligand>
</feature>
<feature type="binding site" evidence="1">
    <location>
        <position position="70"/>
    </location>
    <ligand>
        <name>substrate</name>
    </ligand>
</feature>
<feature type="binding site" evidence="1">
    <location>
        <begin position="80"/>
        <end position="81"/>
    </location>
    <ligand>
        <name>FMN</name>
        <dbReference type="ChEBI" id="CHEBI:58210"/>
    </ligand>
</feature>
<feature type="binding site" evidence="1">
    <location>
        <position position="86"/>
    </location>
    <ligand>
        <name>FMN</name>
        <dbReference type="ChEBI" id="CHEBI:58210"/>
    </ligand>
</feature>
<feature type="binding site" evidence="1">
    <location>
        <position position="87"/>
    </location>
    <ligand>
        <name>FMN</name>
        <dbReference type="ChEBI" id="CHEBI:58210"/>
    </ligand>
</feature>
<feature type="binding site" evidence="1">
    <location>
        <position position="109"/>
    </location>
    <ligand>
        <name>FMN</name>
        <dbReference type="ChEBI" id="CHEBI:58210"/>
    </ligand>
</feature>
<feature type="binding site" evidence="1">
    <location>
        <position position="127"/>
    </location>
    <ligand>
        <name>substrate</name>
    </ligand>
</feature>
<feature type="binding site" evidence="1">
    <location>
        <position position="131"/>
    </location>
    <ligand>
        <name>substrate</name>
    </ligand>
</feature>
<feature type="binding site" evidence="1">
    <location>
        <position position="135"/>
    </location>
    <ligand>
        <name>substrate</name>
    </ligand>
</feature>
<feature type="binding site" evidence="1">
    <location>
        <begin position="144"/>
        <end position="145"/>
    </location>
    <ligand>
        <name>FMN</name>
        <dbReference type="ChEBI" id="CHEBI:58210"/>
    </ligand>
</feature>
<feature type="binding site" evidence="1">
    <location>
        <position position="189"/>
    </location>
    <ligand>
        <name>FMN</name>
        <dbReference type="ChEBI" id="CHEBI:58210"/>
    </ligand>
</feature>
<feature type="binding site" evidence="1">
    <location>
        <begin position="195"/>
        <end position="197"/>
    </location>
    <ligand>
        <name>substrate</name>
    </ligand>
</feature>
<feature type="binding site" evidence="1">
    <location>
        <position position="199"/>
    </location>
    <ligand>
        <name>FMN</name>
        <dbReference type="ChEBI" id="CHEBI:58210"/>
    </ligand>
</feature>
<evidence type="ECO:0000255" key="1">
    <source>
        <dbReference type="HAMAP-Rule" id="MF_01629"/>
    </source>
</evidence>
<dbReference type="EC" id="1.4.3.5" evidence="1"/>
<dbReference type="EMBL" id="CP000238">
    <property type="protein sequence ID" value="ABF14338.1"/>
    <property type="molecule type" value="Genomic_DNA"/>
</dbReference>
<dbReference type="RefSeq" id="WP_011520293.1">
    <property type="nucleotide sequence ID" value="NC_007984.1"/>
</dbReference>
<dbReference type="SMR" id="Q1LU04"/>
<dbReference type="STRING" id="374463.BCI_0082"/>
<dbReference type="KEGG" id="bci:BCI_0082"/>
<dbReference type="HOGENOM" id="CLU_032263_2_2_6"/>
<dbReference type="OrthoDB" id="9780392at2"/>
<dbReference type="UniPathway" id="UPA01068">
    <property type="reaction ID" value="UER00304"/>
</dbReference>
<dbReference type="UniPathway" id="UPA01068">
    <property type="reaction ID" value="UER00305"/>
</dbReference>
<dbReference type="Proteomes" id="UP000002427">
    <property type="component" value="Chromosome"/>
</dbReference>
<dbReference type="GO" id="GO:0010181">
    <property type="term" value="F:FMN binding"/>
    <property type="evidence" value="ECO:0007669"/>
    <property type="project" value="UniProtKB-UniRule"/>
</dbReference>
<dbReference type="GO" id="GO:0004733">
    <property type="term" value="F:pyridoxamine phosphate oxidase activity"/>
    <property type="evidence" value="ECO:0007669"/>
    <property type="project" value="UniProtKB-UniRule"/>
</dbReference>
<dbReference type="GO" id="GO:0008615">
    <property type="term" value="P:pyridoxine biosynthetic process"/>
    <property type="evidence" value="ECO:0007669"/>
    <property type="project" value="UniProtKB-KW"/>
</dbReference>
<dbReference type="Gene3D" id="2.30.110.10">
    <property type="entry name" value="Electron Transport, Fmn-binding Protein, Chain A"/>
    <property type="match status" value="1"/>
</dbReference>
<dbReference type="HAMAP" id="MF_01629">
    <property type="entry name" value="PdxH"/>
    <property type="match status" value="1"/>
</dbReference>
<dbReference type="InterPro" id="IPR000659">
    <property type="entry name" value="Pyridox_Oxase"/>
</dbReference>
<dbReference type="InterPro" id="IPR019740">
    <property type="entry name" value="Pyridox_Oxase_CS"/>
</dbReference>
<dbReference type="InterPro" id="IPR011576">
    <property type="entry name" value="Pyridox_Oxase_N"/>
</dbReference>
<dbReference type="InterPro" id="IPR019576">
    <property type="entry name" value="Pyridoxamine_oxidase_dimer_C"/>
</dbReference>
<dbReference type="InterPro" id="IPR012349">
    <property type="entry name" value="Split_barrel_FMN-bd"/>
</dbReference>
<dbReference type="NCBIfam" id="TIGR00558">
    <property type="entry name" value="pdxH"/>
    <property type="match status" value="1"/>
</dbReference>
<dbReference type="NCBIfam" id="NF004231">
    <property type="entry name" value="PRK05679.1"/>
    <property type="match status" value="1"/>
</dbReference>
<dbReference type="PANTHER" id="PTHR10851:SF0">
    <property type="entry name" value="PYRIDOXINE-5'-PHOSPHATE OXIDASE"/>
    <property type="match status" value="1"/>
</dbReference>
<dbReference type="PANTHER" id="PTHR10851">
    <property type="entry name" value="PYRIDOXINE-5-PHOSPHATE OXIDASE"/>
    <property type="match status" value="1"/>
</dbReference>
<dbReference type="Pfam" id="PF10590">
    <property type="entry name" value="PNP_phzG_C"/>
    <property type="match status" value="1"/>
</dbReference>
<dbReference type="Pfam" id="PF01243">
    <property type="entry name" value="PNPOx_N"/>
    <property type="match status" value="1"/>
</dbReference>
<dbReference type="PIRSF" id="PIRSF000190">
    <property type="entry name" value="Pyd_amn-ph_oxd"/>
    <property type="match status" value="1"/>
</dbReference>
<dbReference type="SUPFAM" id="SSF50475">
    <property type="entry name" value="FMN-binding split barrel"/>
    <property type="match status" value="1"/>
</dbReference>
<dbReference type="PROSITE" id="PS01064">
    <property type="entry name" value="PYRIDOX_OXIDASE"/>
    <property type="match status" value="1"/>
</dbReference>
<organism>
    <name type="scientific">Baumannia cicadellinicola subsp. Homalodisca coagulata</name>
    <dbReference type="NCBI Taxonomy" id="374463"/>
    <lineage>
        <taxon>Bacteria</taxon>
        <taxon>Pseudomonadati</taxon>
        <taxon>Pseudomonadota</taxon>
        <taxon>Gammaproteobacteria</taxon>
        <taxon>Candidatus Palibaumannia</taxon>
    </lineage>
</organism>